<organism>
    <name type="scientific">Arabidopsis thaliana</name>
    <name type="common">Mouse-ear cress</name>
    <dbReference type="NCBI Taxonomy" id="3702"/>
    <lineage>
        <taxon>Eukaryota</taxon>
        <taxon>Viridiplantae</taxon>
        <taxon>Streptophyta</taxon>
        <taxon>Embryophyta</taxon>
        <taxon>Tracheophyta</taxon>
        <taxon>Spermatophyta</taxon>
        <taxon>Magnoliopsida</taxon>
        <taxon>eudicotyledons</taxon>
        <taxon>Gunneridae</taxon>
        <taxon>Pentapetalae</taxon>
        <taxon>rosids</taxon>
        <taxon>malvids</taxon>
        <taxon>Brassicales</taxon>
        <taxon>Brassicaceae</taxon>
        <taxon>Camelineae</taxon>
        <taxon>Arabidopsis</taxon>
    </lineage>
</organism>
<dbReference type="EMBL" id="AB025615">
    <property type="protein sequence ID" value="BAA95753.1"/>
    <property type="molecule type" value="Genomic_DNA"/>
</dbReference>
<dbReference type="EMBL" id="CP002686">
    <property type="protein sequence ID" value="AEE77519.1"/>
    <property type="molecule type" value="Genomic_DNA"/>
</dbReference>
<dbReference type="EMBL" id="BX823042">
    <property type="status" value="NOT_ANNOTATED_CDS"/>
    <property type="molecule type" value="mRNA"/>
</dbReference>
<dbReference type="RefSeq" id="NP_189542.1">
    <property type="nucleotide sequence ID" value="NM_113821.3"/>
</dbReference>
<dbReference type="SMR" id="Q9MBG5"/>
<dbReference type="BioGRID" id="7869">
    <property type="interactions" value="1"/>
</dbReference>
<dbReference type="FunCoup" id="Q9MBG5">
    <property type="interactions" value="15"/>
</dbReference>
<dbReference type="STRING" id="3702.Q9MBG5"/>
<dbReference type="PaxDb" id="3702-AT3G29000.1"/>
<dbReference type="DNASU" id="822540"/>
<dbReference type="EnsemblPlants" id="AT3G29000.1">
    <property type="protein sequence ID" value="AT3G29000.1"/>
    <property type="gene ID" value="AT3G29000"/>
</dbReference>
<dbReference type="GeneID" id="822540"/>
<dbReference type="Gramene" id="AT3G29000.1">
    <property type="protein sequence ID" value="AT3G29000.1"/>
    <property type="gene ID" value="AT3G29000"/>
</dbReference>
<dbReference type="KEGG" id="ath:AT3G29000"/>
<dbReference type="Araport" id="AT3G29000"/>
<dbReference type="TAIR" id="AT3G29000"/>
<dbReference type="eggNOG" id="KOG0027">
    <property type="taxonomic scope" value="Eukaryota"/>
</dbReference>
<dbReference type="HOGENOM" id="CLU_061288_11_0_1"/>
<dbReference type="InParanoid" id="Q9MBG5"/>
<dbReference type="OMA" id="MEKSPAM"/>
<dbReference type="PhylomeDB" id="Q9MBG5"/>
<dbReference type="PRO" id="PR:Q9MBG5"/>
<dbReference type="Proteomes" id="UP000006548">
    <property type="component" value="Chromosome 3"/>
</dbReference>
<dbReference type="ExpressionAtlas" id="Q9MBG5">
    <property type="expression patterns" value="baseline and differential"/>
</dbReference>
<dbReference type="GO" id="GO:0005509">
    <property type="term" value="F:calcium ion binding"/>
    <property type="evidence" value="ECO:0007669"/>
    <property type="project" value="InterPro"/>
</dbReference>
<dbReference type="CDD" id="cd00051">
    <property type="entry name" value="EFh"/>
    <property type="match status" value="1"/>
</dbReference>
<dbReference type="FunFam" id="1.10.238.10:FF:000302">
    <property type="entry name" value="Probable calcium-binding protein CML46"/>
    <property type="match status" value="1"/>
</dbReference>
<dbReference type="Gene3D" id="1.10.238.10">
    <property type="entry name" value="EF-hand"/>
    <property type="match status" value="1"/>
</dbReference>
<dbReference type="InterPro" id="IPR011992">
    <property type="entry name" value="EF-hand-dom_pair"/>
</dbReference>
<dbReference type="InterPro" id="IPR018247">
    <property type="entry name" value="EF_Hand_1_Ca_BS"/>
</dbReference>
<dbReference type="InterPro" id="IPR002048">
    <property type="entry name" value="EF_hand_dom"/>
</dbReference>
<dbReference type="InterPro" id="IPR039647">
    <property type="entry name" value="EF_hand_pair_protein_CML-like"/>
</dbReference>
<dbReference type="InterPro" id="IPR001751">
    <property type="entry name" value="S100/CaBP7/8-like_CS"/>
</dbReference>
<dbReference type="PANTHER" id="PTHR10891">
    <property type="entry name" value="EF-HAND CALCIUM-BINDING DOMAIN CONTAINING PROTEIN"/>
    <property type="match status" value="1"/>
</dbReference>
<dbReference type="Pfam" id="PF13499">
    <property type="entry name" value="EF-hand_7"/>
    <property type="match status" value="1"/>
</dbReference>
<dbReference type="SMART" id="SM00054">
    <property type="entry name" value="EFh"/>
    <property type="match status" value="2"/>
</dbReference>
<dbReference type="SUPFAM" id="SSF47473">
    <property type="entry name" value="EF-hand"/>
    <property type="match status" value="1"/>
</dbReference>
<dbReference type="PROSITE" id="PS00018">
    <property type="entry name" value="EF_HAND_1"/>
    <property type="match status" value="2"/>
</dbReference>
<dbReference type="PROSITE" id="PS50222">
    <property type="entry name" value="EF_HAND_2"/>
    <property type="match status" value="3"/>
</dbReference>
<dbReference type="PROSITE" id="PS00303">
    <property type="entry name" value="S100_CABP"/>
    <property type="match status" value="1"/>
</dbReference>
<protein>
    <recommendedName>
        <fullName evidence="5">Probable calcium-binding protein CML45</fullName>
    </recommendedName>
    <alternativeName>
        <fullName evidence="4">Calmodulin-like protein 45</fullName>
    </alternativeName>
</protein>
<name>CML45_ARATH</name>
<keyword id="KW-0106">Calcium</keyword>
<keyword id="KW-0479">Metal-binding</keyword>
<keyword id="KW-1185">Reference proteome</keyword>
<keyword id="KW-0677">Repeat</keyword>
<reference key="1">
    <citation type="journal article" date="2000" name="DNA Res.">
        <title>Structural analysis of Arabidopsis thaliana chromosome 3. I. Sequence features of the regions of 4,504,864 bp covered by sixty P1 and TAC clones.</title>
        <authorList>
            <person name="Sato S."/>
            <person name="Nakamura Y."/>
            <person name="Kaneko T."/>
            <person name="Katoh T."/>
            <person name="Asamizu E."/>
            <person name="Tabata S."/>
        </authorList>
    </citation>
    <scope>NUCLEOTIDE SEQUENCE [LARGE SCALE GENOMIC DNA]</scope>
    <source>
        <strain>cv. Columbia</strain>
    </source>
</reference>
<reference key="2">
    <citation type="journal article" date="2017" name="Plant J.">
        <title>Araport11: a complete reannotation of the Arabidopsis thaliana reference genome.</title>
        <authorList>
            <person name="Cheng C.Y."/>
            <person name="Krishnakumar V."/>
            <person name="Chan A.P."/>
            <person name="Thibaud-Nissen F."/>
            <person name="Schobel S."/>
            <person name="Town C.D."/>
        </authorList>
    </citation>
    <scope>GENOME REANNOTATION</scope>
    <source>
        <strain>cv. Columbia</strain>
    </source>
</reference>
<reference key="3">
    <citation type="journal article" date="2004" name="Genome Res.">
        <title>Whole genome sequence comparisons and 'full-length' cDNA sequences: a combined approach to evaluate and improve Arabidopsis genome annotation.</title>
        <authorList>
            <person name="Castelli V."/>
            <person name="Aury J.-M."/>
            <person name="Jaillon O."/>
            <person name="Wincker P."/>
            <person name="Clepet C."/>
            <person name="Menard M."/>
            <person name="Cruaud C."/>
            <person name="Quetier F."/>
            <person name="Scarpelli C."/>
            <person name="Schaechter V."/>
            <person name="Temple G."/>
            <person name="Caboche M."/>
            <person name="Weissenbach J."/>
            <person name="Salanoubat M."/>
        </authorList>
    </citation>
    <scope>NUCLEOTIDE SEQUENCE [LARGE SCALE MRNA]</scope>
    <source>
        <strain>cv. Columbia</strain>
    </source>
</reference>
<reference key="4">
    <citation type="journal article" date="2003" name="New Phytol.">
        <title>Calmodulins and related potential calcium sensors of Arabidopsis.</title>
        <authorList>
            <person name="McCormack E."/>
            <person name="Braam J."/>
        </authorList>
    </citation>
    <scope>GENE FAMILY</scope>
    <scope>NOMENCLATURE</scope>
</reference>
<evidence type="ECO:0000250" key="1"/>
<evidence type="ECO:0000255" key="2">
    <source>
        <dbReference type="PROSITE-ProRule" id="PRU00448"/>
    </source>
</evidence>
<evidence type="ECO:0000256" key="3">
    <source>
        <dbReference type="SAM" id="MobiDB-lite"/>
    </source>
</evidence>
<evidence type="ECO:0000303" key="4">
    <source ref="4"/>
</evidence>
<evidence type="ECO:0000305" key="5"/>
<comment type="function">
    <text evidence="1">Potential calcium sensor.</text>
</comment>
<comment type="caution">
    <text evidence="5">Although assigned as a calmodulin family member by Ref.4, it only contains EF-hand domains.</text>
</comment>
<gene>
    <name evidence="4" type="primary">CML45</name>
    <name type="ordered locus">At3g29000</name>
    <name type="ORF">K5K13.13</name>
</gene>
<proteinExistence type="evidence at transcript level"/>
<accession>Q9MBG5</accession>
<feature type="chain" id="PRO_0000342956" description="Probable calcium-binding protein CML45">
    <location>
        <begin position="1"/>
        <end position="194"/>
    </location>
</feature>
<feature type="domain" description="EF-hand 1" evidence="2">
    <location>
        <begin position="76"/>
        <end position="98"/>
    </location>
</feature>
<feature type="domain" description="EF-hand 2" evidence="2">
    <location>
        <begin position="122"/>
        <end position="157"/>
    </location>
</feature>
<feature type="domain" description="EF-hand 3" evidence="2">
    <location>
        <begin position="160"/>
        <end position="194"/>
    </location>
</feature>
<feature type="region of interest" description="Disordered" evidence="3">
    <location>
        <begin position="52"/>
        <end position="81"/>
    </location>
</feature>
<feature type="compositionally biased region" description="Basic and acidic residues" evidence="3">
    <location>
        <begin position="52"/>
        <end position="63"/>
    </location>
</feature>
<feature type="compositionally biased region" description="Acidic residues" evidence="3">
    <location>
        <begin position="64"/>
        <end position="81"/>
    </location>
</feature>
<feature type="binding site" evidence="2">
    <location>
        <position position="135"/>
    </location>
    <ligand>
        <name>Ca(2+)</name>
        <dbReference type="ChEBI" id="CHEBI:29108"/>
        <label>1</label>
    </ligand>
</feature>
<feature type="binding site" evidence="2">
    <location>
        <position position="137"/>
    </location>
    <ligand>
        <name>Ca(2+)</name>
        <dbReference type="ChEBI" id="CHEBI:29108"/>
        <label>1</label>
    </ligand>
</feature>
<feature type="binding site" evidence="2">
    <location>
        <position position="139"/>
    </location>
    <ligand>
        <name>Ca(2+)</name>
        <dbReference type="ChEBI" id="CHEBI:29108"/>
        <label>1</label>
    </ligand>
</feature>
<feature type="binding site" evidence="2">
    <location>
        <position position="146"/>
    </location>
    <ligand>
        <name>Ca(2+)</name>
        <dbReference type="ChEBI" id="CHEBI:29108"/>
        <label>1</label>
    </ligand>
</feature>
<feature type="binding site" evidence="2">
    <location>
        <position position="173"/>
    </location>
    <ligand>
        <name>Ca(2+)</name>
        <dbReference type="ChEBI" id="CHEBI:29108"/>
        <label>2</label>
    </ligand>
</feature>
<feature type="binding site" evidence="2">
    <location>
        <position position="175"/>
    </location>
    <ligand>
        <name>Ca(2+)</name>
        <dbReference type="ChEBI" id="CHEBI:29108"/>
        <label>2</label>
    </ligand>
</feature>
<feature type="binding site" evidence="2">
    <location>
        <position position="177"/>
    </location>
    <ligand>
        <name>Ca(2+)</name>
        <dbReference type="ChEBI" id="CHEBI:29108"/>
        <label>2</label>
    </ligand>
</feature>
<feature type="binding site" evidence="2">
    <location>
        <position position="179"/>
    </location>
    <ligand>
        <name>Ca(2+)</name>
        <dbReference type="ChEBI" id="CHEBI:29108"/>
        <label>2</label>
    </ligand>
</feature>
<feature type="binding site" evidence="2">
    <location>
        <position position="184"/>
    </location>
    <ligand>
        <name>Ca(2+)</name>
        <dbReference type="ChEBI" id="CHEBI:29108"/>
        <label>2</label>
    </ligand>
</feature>
<sequence>MESKSSSSSLPLFALFNFFLISFCRWVSSTRIFLSRFVPLLQHHQRVFDKKNNKDQQETLTKQEDDDDDDDDDDDDDDDDIDISREEAEMVMRSLGLFYNDDQLQEQYSAKEVSSLFEEKEASLEEVKQAFDVFDENKDGFIDAIELQRVLTILGFKQGSYLDNCLVMIRSLDGNKDGKIDFNEFVKFMETSFY</sequence>